<feature type="chain" id="PRO_0000263594" description="Small ribosomal subunit protein uS12">
    <location>
        <begin position="1"/>
        <end position="123"/>
    </location>
</feature>
<feature type="region of interest" description="Disordered" evidence="3">
    <location>
        <begin position="1"/>
        <end position="24"/>
    </location>
</feature>
<feature type="compositionally biased region" description="Basic residues" evidence="3">
    <location>
        <begin position="9"/>
        <end position="19"/>
    </location>
</feature>
<feature type="modified residue" description="3-methylthioaspartic acid" evidence="1">
    <location>
        <position position="89"/>
    </location>
</feature>
<protein>
    <recommendedName>
        <fullName evidence="2">Small ribosomal subunit protein uS12</fullName>
    </recommendedName>
    <alternativeName>
        <fullName evidence="4">30S ribosomal protein S12</fullName>
    </alternativeName>
</protein>
<organism>
    <name type="scientific">Sphingopyxis alaskensis (strain DSM 13593 / LMG 18877 / RB2256)</name>
    <name type="common">Sphingomonas alaskensis</name>
    <dbReference type="NCBI Taxonomy" id="317655"/>
    <lineage>
        <taxon>Bacteria</taxon>
        <taxon>Pseudomonadati</taxon>
        <taxon>Pseudomonadota</taxon>
        <taxon>Alphaproteobacteria</taxon>
        <taxon>Sphingomonadales</taxon>
        <taxon>Sphingomonadaceae</taxon>
        <taxon>Sphingopyxis</taxon>
    </lineage>
</organism>
<comment type="function">
    <text evidence="2">With S4 and S5 plays an important role in translational accuracy.</text>
</comment>
<comment type="function">
    <text evidence="2">Interacts with and stabilizes bases of the 16S rRNA that are involved in tRNA selection in the A site and with the mRNA backbone. Located at the interface of the 30S and 50S subunits, it traverses the body of the 30S subunit contacting proteins on the other side and probably holding the rRNA structure together. The combined cluster of proteins S8, S12 and S17 appears to hold together the shoulder and platform of the 30S subunit.</text>
</comment>
<comment type="subunit">
    <text evidence="2">Part of the 30S ribosomal subunit. Contacts proteins S8 and S17. May interact with IF1 in the 30S initiation complex.</text>
</comment>
<comment type="similarity">
    <text evidence="2">Belongs to the universal ribosomal protein uS12 family.</text>
</comment>
<proteinExistence type="inferred from homology"/>
<name>RS12_SPHAL</name>
<gene>
    <name evidence="2" type="primary">rpsL</name>
    <name type="ordered locus">Sala_2823</name>
</gene>
<accession>Q1GP94</accession>
<reference key="1">
    <citation type="journal article" date="2009" name="Proc. Natl. Acad. Sci. U.S.A.">
        <title>The genomic basis of trophic strategy in marine bacteria.</title>
        <authorList>
            <person name="Lauro F.M."/>
            <person name="McDougald D."/>
            <person name="Thomas T."/>
            <person name="Williams T.J."/>
            <person name="Egan S."/>
            <person name="Rice S."/>
            <person name="DeMaere M.Z."/>
            <person name="Ting L."/>
            <person name="Ertan H."/>
            <person name="Johnson J."/>
            <person name="Ferriera S."/>
            <person name="Lapidus A."/>
            <person name="Anderson I."/>
            <person name="Kyrpides N."/>
            <person name="Munk A.C."/>
            <person name="Detter C."/>
            <person name="Han C.S."/>
            <person name="Brown M.V."/>
            <person name="Robb F.T."/>
            <person name="Kjelleberg S."/>
            <person name="Cavicchioli R."/>
        </authorList>
    </citation>
    <scope>NUCLEOTIDE SEQUENCE [LARGE SCALE GENOMIC DNA]</scope>
    <source>
        <strain>DSM 13593 / LMG 18877 / RB2256</strain>
    </source>
</reference>
<dbReference type="EMBL" id="CP000356">
    <property type="protein sequence ID" value="ABF54528.1"/>
    <property type="molecule type" value="Genomic_DNA"/>
</dbReference>
<dbReference type="RefSeq" id="WP_011543092.1">
    <property type="nucleotide sequence ID" value="NC_008048.1"/>
</dbReference>
<dbReference type="SMR" id="Q1GP94"/>
<dbReference type="STRING" id="317655.Sala_2823"/>
<dbReference type="KEGG" id="sal:Sala_2823"/>
<dbReference type="eggNOG" id="COG0048">
    <property type="taxonomic scope" value="Bacteria"/>
</dbReference>
<dbReference type="HOGENOM" id="CLU_104295_1_2_5"/>
<dbReference type="OrthoDB" id="9802366at2"/>
<dbReference type="Proteomes" id="UP000006578">
    <property type="component" value="Chromosome"/>
</dbReference>
<dbReference type="GO" id="GO:0015935">
    <property type="term" value="C:small ribosomal subunit"/>
    <property type="evidence" value="ECO:0007669"/>
    <property type="project" value="InterPro"/>
</dbReference>
<dbReference type="GO" id="GO:0019843">
    <property type="term" value="F:rRNA binding"/>
    <property type="evidence" value="ECO:0007669"/>
    <property type="project" value="UniProtKB-UniRule"/>
</dbReference>
<dbReference type="GO" id="GO:0003735">
    <property type="term" value="F:structural constituent of ribosome"/>
    <property type="evidence" value="ECO:0007669"/>
    <property type="project" value="InterPro"/>
</dbReference>
<dbReference type="GO" id="GO:0000049">
    <property type="term" value="F:tRNA binding"/>
    <property type="evidence" value="ECO:0007669"/>
    <property type="project" value="UniProtKB-UniRule"/>
</dbReference>
<dbReference type="GO" id="GO:0006412">
    <property type="term" value="P:translation"/>
    <property type="evidence" value="ECO:0007669"/>
    <property type="project" value="UniProtKB-UniRule"/>
</dbReference>
<dbReference type="CDD" id="cd03368">
    <property type="entry name" value="Ribosomal_S12"/>
    <property type="match status" value="1"/>
</dbReference>
<dbReference type="FunFam" id="2.40.50.140:FF:000001">
    <property type="entry name" value="30S ribosomal protein S12"/>
    <property type="match status" value="1"/>
</dbReference>
<dbReference type="Gene3D" id="2.40.50.140">
    <property type="entry name" value="Nucleic acid-binding proteins"/>
    <property type="match status" value="1"/>
</dbReference>
<dbReference type="HAMAP" id="MF_00403_B">
    <property type="entry name" value="Ribosomal_uS12_B"/>
    <property type="match status" value="1"/>
</dbReference>
<dbReference type="InterPro" id="IPR012340">
    <property type="entry name" value="NA-bd_OB-fold"/>
</dbReference>
<dbReference type="InterPro" id="IPR006032">
    <property type="entry name" value="Ribosomal_uS12"/>
</dbReference>
<dbReference type="InterPro" id="IPR005679">
    <property type="entry name" value="Ribosomal_uS12_bac"/>
</dbReference>
<dbReference type="NCBIfam" id="TIGR00981">
    <property type="entry name" value="rpsL_bact"/>
    <property type="match status" value="1"/>
</dbReference>
<dbReference type="PANTHER" id="PTHR11652">
    <property type="entry name" value="30S RIBOSOMAL PROTEIN S12 FAMILY MEMBER"/>
    <property type="match status" value="1"/>
</dbReference>
<dbReference type="Pfam" id="PF00164">
    <property type="entry name" value="Ribosom_S12_S23"/>
    <property type="match status" value="1"/>
</dbReference>
<dbReference type="PIRSF" id="PIRSF002133">
    <property type="entry name" value="Ribosomal_S12/S23"/>
    <property type="match status" value="1"/>
</dbReference>
<dbReference type="PRINTS" id="PR01034">
    <property type="entry name" value="RIBOSOMALS12"/>
</dbReference>
<dbReference type="SUPFAM" id="SSF50249">
    <property type="entry name" value="Nucleic acid-binding proteins"/>
    <property type="match status" value="1"/>
</dbReference>
<dbReference type="PROSITE" id="PS00055">
    <property type="entry name" value="RIBOSOMAL_S12"/>
    <property type="match status" value="1"/>
</dbReference>
<evidence type="ECO:0000250" key="1"/>
<evidence type="ECO:0000255" key="2">
    <source>
        <dbReference type="HAMAP-Rule" id="MF_00403"/>
    </source>
</evidence>
<evidence type="ECO:0000256" key="3">
    <source>
        <dbReference type="SAM" id="MobiDB-lite"/>
    </source>
</evidence>
<evidence type="ECO:0000305" key="4"/>
<keyword id="KW-0488">Methylation</keyword>
<keyword id="KW-1185">Reference proteome</keyword>
<keyword id="KW-0687">Ribonucleoprotein</keyword>
<keyword id="KW-0689">Ribosomal protein</keyword>
<keyword id="KW-0694">RNA-binding</keyword>
<keyword id="KW-0699">rRNA-binding</keyword>
<keyword id="KW-0820">tRNA-binding</keyword>
<sequence length="123" mass="13833">MPTINQLVRKGRTPQKVKSKVPAMDANPQKRGVCTRVYTTTPKKPNSALRKVAKVRLTNAREVITYIPGEGHNLQEHSVVLIRGGRVRDLPGVRYHVLRGVLDTQGVKDRKQSRSKYGAKRPK</sequence>